<comment type="similarity">
    <text evidence="1">Belongs to the UPF0367 family.</text>
</comment>
<dbReference type="EMBL" id="CP000100">
    <property type="protein sequence ID" value="ABB57668.1"/>
    <property type="molecule type" value="Genomic_DNA"/>
</dbReference>
<dbReference type="RefSeq" id="WP_011378120.1">
    <property type="nucleotide sequence ID" value="NZ_JACJTX010000001.1"/>
</dbReference>
<dbReference type="STRING" id="1140.Synpcc7942_1638"/>
<dbReference type="PaxDb" id="1140-Synpcc7942_1638"/>
<dbReference type="KEGG" id="syf:Synpcc7942_1638"/>
<dbReference type="eggNOG" id="ENOG5032YB3">
    <property type="taxonomic scope" value="Bacteria"/>
</dbReference>
<dbReference type="HOGENOM" id="CLU_180777_0_0_3"/>
<dbReference type="OrthoDB" id="516864at2"/>
<dbReference type="BioCyc" id="SYNEL:SYNPCC7942_1638-MONOMER"/>
<dbReference type="Proteomes" id="UP000889800">
    <property type="component" value="Chromosome"/>
</dbReference>
<dbReference type="HAMAP" id="MF_01360">
    <property type="entry name" value="UPF0367"/>
    <property type="match status" value="1"/>
</dbReference>
<dbReference type="InterPro" id="IPR020885">
    <property type="entry name" value="UPF0367"/>
</dbReference>
<dbReference type="NCBIfam" id="NF010236">
    <property type="entry name" value="PRK13683.1"/>
    <property type="match status" value="1"/>
</dbReference>
<name>Y1638_SYNE7</name>
<reference key="1">
    <citation type="submission" date="2005-08" db="EMBL/GenBank/DDBJ databases">
        <title>Complete sequence of chromosome 1 of Synechococcus elongatus PCC 7942.</title>
        <authorList>
            <consortium name="US DOE Joint Genome Institute"/>
            <person name="Copeland A."/>
            <person name="Lucas S."/>
            <person name="Lapidus A."/>
            <person name="Barry K."/>
            <person name="Detter J.C."/>
            <person name="Glavina T."/>
            <person name="Hammon N."/>
            <person name="Israni S."/>
            <person name="Pitluck S."/>
            <person name="Schmutz J."/>
            <person name="Larimer F."/>
            <person name="Land M."/>
            <person name="Kyrpides N."/>
            <person name="Lykidis A."/>
            <person name="Golden S."/>
            <person name="Richardson P."/>
        </authorList>
    </citation>
    <scope>NUCLEOTIDE SEQUENCE [LARGE SCALE GENOMIC DNA]</scope>
    <source>
        <strain>ATCC 33912 / PCC 7942 / FACHB-805</strain>
    </source>
</reference>
<accession>Q31MQ1</accession>
<organism>
    <name type="scientific">Synechococcus elongatus (strain ATCC 33912 / PCC 7942 / FACHB-805)</name>
    <name type="common">Anacystis nidulans R2</name>
    <dbReference type="NCBI Taxonomy" id="1140"/>
    <lineage>
        <taxon>Bacteria</taxon>
        <taxon>Bacillati</taxon>
        <taxon>Cyanobacteriota</taxon>
        <taxon>Cyanophyceae</taxon>
        <taxon>Synechococcales</taxon>
        <taxon>Synechococcaceae</taxon>
        <taxon>Synechococcus</taxon>
    </lineage>
</organism>
<proteinExistence type="inferred from homology"/>
<feature type="chain" id="PRO_0000240503" description="UPF0367 protein Synpcc7942_1638">
    <location>
        <begin position="1"/>
        <end position="88"/>
    </location>
</feature>
<gene>
    <name type="ordered locus">Synpcc7942_1638</name>
</gene>
<sequence>MYILEISLKFTPMPVSVQRKEAEAAQAAYQQVVEALRSGQPSVLELHCEFQAEKKLAVLTSEIASVQLYEKSGGSATVKRPGFAVIGE</sequence>
<evidence type="ECO:0000255" key="1">
    <source>
        <dbReference type="HAMAP-Rule" id="MF_01360"/>
    </source>
</evidence>
<keyword id="KW-1185">Reference proteome</keyword>
<protein>
    <recommendedName>
        <fullName evidence="1">UPF0367 protein Synpcc7942_1638</fullName>
    </recommendedName>
</protein>